<evidence type="ECO:0000255" key="1">
    <source>
        <dbReference type="HAMAP-Rule" id="MF_01511"/>
    </source>
</evidence>
<sequence>MQIFDYDNILLLPRKCRVESRSECDASVTLGARSFRLPVVPANMKTVVDEPICLWLAQNGYFYVMHRFDLDNVKFVKQMHAKGVFASISLGVKKPDYDTVDQLVAEGLVPEYITIDIAHGHADSVKNMIGYLKQKLPGSFVIAGNIGTPEAVIDLENWGADATKVGIGPGKVCITKLKTGFGTGGWQLSALKWCARVATKPIIADGGIRDHGDIAKSVRFGASMVMIGSLFAGHEESPGRTVEVDGALFKEYYGSASDFNKGEYKHVEGKRILEPIKGKLADTLIEMEQDVQSSISYAGGRALMDIRKVNYVTLGGDNAGEHLLM</sequence>
<proteinExistence type="inferred from homology"/>
<keyword id="KW-0521">NADP</keyword>
<keyword id="KW-0560">Oxidoreductase</keyword>
<feature type="chain" id="PRO_1000215347" description="GMP reductase">
    <location>
        <begin position="1"/>
        <end position="325"/>
    </location>
</feature>
<feature type="active site" description="Thioimidate intermediate" evidence="1">
    <location>
        <position position="173"/>
    </location>
</feature>
<feature type="binding site" evidence="1">
    <location>
        <begin position="202"/>
        <end position="225"/>
    </location>
    <ligand>
        <name>NADP(+)</name>
        <dbReference type="ChEBI" id="CHEBI:58349"/>
    </ligand>
</feature>
<comment type="function">
    <text evidence="1">Catalyzes the irreversible NADPH-dependent deamination of GMP to IMP. It functions in the conversion of nucleobase, nucleoside and nucleotide derivatives of G to A nucleotides, and in maintaining the intracellular balance of A and G nucleotides.</text>
</comment>
<comment type="catalytic activity">
    <reaction evidence="1">
        <text>IMP + NH4(+) + NADP(+) = GMP + NADPH + 2 H(+)</text>
        <dbReference type="Rhea" id="RHEA:17185"/>
        <dbReference type="ChEBI" id="CHEBI:15378"/>
        <dbReference type="ChEBI" id="CHEBI:28938"/>
        <dbReference type="ChEBI" id="CHEBI:57783"/>
        <dbReference type="ChEBI" id="CHEBI:58053"/>
        <dbReference type="ChEBI" id="CHEBI:58115"/>
        <dbReference type="ChEBI" id="CHEBI:58349"/>
        <dbReference type="EC" id="1.7.1.7"/>
    </reaction>
</comment>
<comment type="similarity">
    <text evidence="1">Belongs to the IMPDH/GMPR family. GuaC type 2 subfamily.</text>
</comment>
<gene>
    <name evidence="1" type="primary">guaC</name>
    <name type="ordered locus">Vapar_1534</name>
</gene>
<organism>
    <name type="scientific">Variovorax paradoxus (strain S110)</name>
    <dbReference type="NCBI Taxonomy" id="543728"/>
    <lineage>
        <taxon>Bacteria</taxon>
        <taxon>Pseudomonadati</taxon>
        <taxon>Pseudomonadota</taxon>
        <taxon>Betaproteobacteria</taxon>
        <taxon>Burkholderiales</taxon>
        <taxon>Comamonadaceae</taxon>
        <taxon>Variovorax</taxon>
    </lineage>
</organism>
<reference key="1">
    <citation type="journal article" date="2011" name="J. Bacteriol.">
        <title>Complete genome sequence of the metabolically versatile plant growth-promoting endophyte, Variovorax paradoxus S110.</title>
        <authorList>
            <person name="Han J.I."/>
            <person name="Choi H.K."/>
            <person name="Lee S.W."/>
            <person name="Orwin P.M."/>
            <person name="Kim J."/>
            <person name="Laroe S.L."/>
            <person name="Kim T.G."/>
            <person name="O'Neil J."/>
            <person name="Leadbetter J.R."/>
            <person name="Lee S.Y."/>
            <person name="Hur C.G."/>
            <person name="Spain J.C."/>
            <person name="Ovchinnikova G."/>
            <person name="Goodwin L."/>
            <person name="Han C."/>
        </authorList>
    </citation>
    <scope>NUCLEOTIDE SEQUENCE [LARGE SCALE GENOMIC DNA]</scope>
    <source>
        <strain>S110</strain>
    </source>
</reference>
<accession>C5CT60</accession>
<protein>
    <recommendedName>
        <fullName evidence="1">GMP reductase</fullName>
        <ecNumber evidence="1">1.7.1.7</ecNumber>
    </recommendedName>
    <alternativeName>
        <fullName evidence="1">Guanosine 5'-monophosphate oxidoreductase</fullName>
        <shortName evidence="1">Guanosine monophosphate reductase</shortName>
    </alternativeName>
</protein>
<name>GUAC_VARPS</name>
<dbReference type="EC" id="1.7.1.7" evidence="1"/>
<dbReference type="EMBL" id="CP001635">
    <property type="protein sequence ID" value="ACS18185.1"/>
    <property type="molecule type" value="Genomic_DNA"/>
</dbReference>
<dbReference type="SMR" id="C5CT60"/>
<dbReference type="STRING" id="543728.Vapar_1534"/>
<dbReference type="KEGG" id="vap:Vapar_1534"/>
<dbReference type="eggNOG" id="COG0516">
    <property type="taxonomic scope" value="Bacteria"/>
</dbReference>
<dbReference type="HOGENOM" id="CLU_022552_5_0_4"/>
<dbReference type="OrthoDB" id="9805398at2"/>
<dbReference type="GO" id="GO:0005829">
    <property type="term" value="C:cytosol"/>
    <property type="evidence" value="ECO:0007669"/>
    <property type="project" value="TreeGrafter"/>
</dbReference>
<dbReference type="GO" id="GO:1902560">
    <property type="term" value="C:GMP reductase complex"/>
    <property type="evidence" value="ECO:0007669"/>
    <property type="project" value="InterPro"/>
</dbReference>
<dbReference type="GO" id="GO:0003920">
    <property type="term" value="F:GMP reductase activity"/>
    <property type="evidence" value="ECO:0007669"/>
    <property type="project" value="UniProtKB-UniRule"/>
</dbReference>
<dbReference type="GO" id="GO:0006163">
    <property type="term" value="P:purine nucleotide metabolic process"/>
    <property type="evidence" value="ECO:0007669"/>
    <property type="project" value="UniProtKB-UniRule"/>
</dbReference>
<dbReference type="CDD" id="cd00381">
    <property type="entry name" value="IMPDH"/>
    <property type="match status" value="1"/>
</dbReference>
<dbReference type="Gene3D" id="3.20.20.70">
    <property type="entry name" value="Aldolase class I"/>
    <property type="match status" value="1"/>
</dbReference>
<dbReference type="HAMAP" id="MF_01511">
    <property type="entry name" value="GMP_reduct_type2"/>
    <property type="match status" value="1"/>
</dbReference>
<dbReference type="InterPro" id="IPR013785">
    <property type="entry name" value="Aldolase_TIM"/>
</dbReference>
<dbReference type="InterPro" id="IPR050139">
    <property type="entry name" value="GMP_reductase"/>
</dbReference>
<dbReference type="InterPro" id="IPR005994">
    <property type="entry name" value="GuaC_type_2"/>
</dbReference>
<dbReference type="InterPro" id="IPR015875">
    <property type="entry name" value="IMP_DH/GMP_Rdtase_CS"/>
</dbReference>
<dbReference type="InterPro" id="IPR001093">
    <property type="entry name" value="IMP_DH_GMPRt"/>
</dbReference>
<dbReference type="NCBIfam" id="TIGR01306">
    <property type="entry name" value="GMP_reduct_2"/>
    <property type="match status" value="1"/>
</dbReference>
<dbReference type="NCBIfam" id="NF003966">
    <property type="entry name" value="PRK05458.1"/>
    <property type="match status" value="1"/>
</dbReference>
<dbReference type="PANTHER" id="PTHR43170">
    <property type="entry name" value="GMP REDUCTASE"/>
    <property type="match status" value="1"/>
</dbReference>
<dbReference type="PANTHER" id="PTHR43170:SF5">
    <property type="entry name" value="GMP REDUCTASE"/>
    <property type="match status" value="1"/>
</dbReference>
<dbReference type="Pfam" id="PF00478">
    <property type="entry name" value="IMPDH"/>
    <property type="match status" value="1"/>
</dbReference>
<dbReference type="PIRSF" id="PIRSF036500">
    <property type="entry name" value="GMP_red_Firmic"/>
    <property type="match status" value="1"/>
</dbReference>
<dbReference type="SMART" id="SM01240">
    <property type="entry name" value="IMPDH"/>
    <property type="match status" value="1"/>
</dbReference>
<dbReference type="SUPFAM" id="SSF51412">
    <property type="entry name" value="Inosine monophosphate dehydrogenase (IMPDH)"/>
    <property type="match status" value="1"/>
</dbReference>
<dbReference type="PROSITE" id="PS00487">
    <property type="entry name" value="IMP_DH_GMP_RED"/>
    <property type="match status" value="1"/>
</dbReference>